<proteinExistence type="inferred from homology"/>
<comment type="function">
    <text evidence="1">NDH shuttles electrons from NAD(P)H:plastoquinone, via FMN and iron-sulfur (Fe-S) centers, to quinones in the photosynthetic chain and possibly in a chloroplast respiratory chain. The immediate electron acceptor for the enzyme in this species is believed to be plastoquinone. Couples the redox reaction to proton translocation, and thus conserves the redox energy in a proton gradient.</text>
</comment>
<comment type="catalytic activity">
    <reaction evidence="1">
        <text>a plastoquinone + NADH + (n+1) H(+)(in) = a plastoquinol + NAD(+) + n H(+)(out)</text>
        <dbReference type="Rhea" id="RHEA:42608"/>
        <dbReference type="Rhea" id="RHEA-COMP:9561"/>
        <dbReference type="Rhea" id="RHEA-COMP:9562"/>
        <dbReference type="ChEBI" id="CHEBI:15378"/>
        <dbReference type="ChEBI" id="CHEBI:17757"/>
        <dbReference type="ChEBI" id="CHEBI:57540"/>
        <dbReference type="ChEBI" id="CHEBI:57945"/>
        <dbReference type="ChEBI" id="CHEBI:62192"/>
    </reaction>
</comment>
<comment type="catalytic activity">
    <reaction evidence="1">
        <text>a plastoquinone + NADPH + (n+1) H(+)(in) = a plastoquinol + NADP(+) + n H(+)(out)</text>
        <dbReference type="Rhea" id="RHEA:42612"/>
        <dbReference type="Rhea" id="RHEA-COMP:9561"/>
        <dbReference type="Rhea" id="RHEA-COMP:9562"/>
        <dbReference type="ChEBI" id="CHEBI:15378"/>
        <dbReference type="ChEBI" id="CHEBI:17757"/>
        <dbReference type="ChEBI" id="CHEBI:57783"/>
        <dbReference type="ChEBI" id="CHEBI:58349"/>
        <dbReference type="ChEBI" id="CHEBI:62192"/>
    </reaction>
</comment>
<comment type="subunit">
    <text evidence="1">NDH is composed of at least 16 different subunits, 5 of which are encoded in the nucleus.</text>
</comment>
<comment type="subcellular location">
    <subcellularLocation>
        <location evidence="1">Plastid</location>
        <location evidence="1">Chloroplast thylakoid membrane</location>
        <topology evidence="1">Peripheral membrane protein</topology>
        <orientation evidence="1">Stromal side</orientation>
    </subcellularLocation>
</comment>
<comment type="similarity">
    <text evidence="1">Belongs to the complex I 49 kDa subunit family.</text>
</comment>
<evidence type="ECO:0000255" key="1">
    <source>
        <dbReference type="HAMAP-Rule" id="MF_01358"/>
    </source>
</evidence>
<keyword id="KW-0150">Chloroplast</keyword>
<keyword id="KW-0472">Membrane</keyword>
<keyword id="KW-0520">NAD</keyword>
<keyword id="KW-0521">NADP</keyword>
<keyword id="KW-0934">Plastid</keyword>
<keyword id="KW-0618">Plastoquinone</keyword>
<keyword id="KW-0874">Quinone</keyword>
<keyword id="KW-0793">Thylakoid</keyword>
<keyword id="KW-1278">Translocase</keyword>
<keyword id="KW-0813">Transport</keyword>
<reference key="1">
    <citation type="journal article" date="2005" name="BMC Biol.">
        <title>The complete chloroplast DNA sequences of the charophycean green algae Staurastrum and Zygnema reveal that the chloroplast genome underwent extensive changes during the evolution of the Zygnematales.</title>
        <authorList>
            <person name="Turmel M."/>
            <person name="Otis C."/>
            <person name="Lemieux C."/>
        </authorList>
    </citation>
    <scope>NUCLEOTIDE SEQUENCE [LARGE SCALE GENOMIC DNA]</scope>
</reference>
<sequence length="395" mass="45730">MTMLKTKADPMIVSMGPHHPSMHGVLRLIVTLDGENVIDCEPILGYLHRGMEKIAENRTTLQYLPYVTRWDYLATMFTEAVTVNAPERLANIQVPKRASYIRVIMLELSRLASHLLWLGPFMADIGAQTPFFYIFREREMIYDLFESATGMRMMHNYFRIGGVAVDLPYGWVDKCLDFCDYFLPKIDEYERLITRNPIFLKRVEGVGFIGREEAINWGLSGPMLRASGVQWDLRKVDHYECYDEFDWQVEWQTEGDCLARYLVRIGEMRESTKIIQQALKSIPGGPYENLEARRIGLIGTDSAQWNDFEYQFISKKPSPTFKLPKQEHYVRVEAPKGELGIYLIGDDSIFPWRWKIRPPGFINLQILPQLLRGVKLADIMTILGSIDIIMGEVDR</sequence>
<feature type="chain" id="PRO_0000358028" description="NAD(P)H-quinone oxidoreductase subunit H, chloroplastic">
    <location>
        <begin position="1"/>
        <end position="395"/>
    </location>
</feature>
<organism>
    <name type="scientific">Staurastrum punctulatum</name>
    <name type="common">Green alga</name>
    <name type="synonym">Cosmoastrum punctulatum</name>
    <dbReference type="NCBI Taxonomy" id="102822"/>
    <lineage>
        <taxon>Eukaryota</taxon>
        <taxon>Viridiplantae</taxon>
        <taxon>Streptophyta</taxon>
        <taxon>Zygnematophyceae</taxon>
        <taxon>Zygnematophycidae</taxon>
        <taxon>Desmidiales</taxon>
        <taxon>Desmidiaceae</taxon>
        <taxon>Staurastrum</taxon>
    </lineage>
</organism>
<dbReference type="EC" id="7.1.1.-" evidence="1"/>
<dbReference type="EMBL" id="AY958085">
    <property type="protein sequence ID" value="AAX45704.1"/>
    <property type="molecule type" value="Genomic_DNA"/>
</dbReference>
<dbReference type="RefSeq" id="YP_636375.1">
    <property type="nucleotide sequence ID" value="NC_008116.1"/>
</dbReference>
<dbReference type="SMR" id="Q32S01"/>
<dbReference type="GeneID" id="4108596"/>
<dbReference type="GO" id="GO:0009535">
    <property type="term" value="C:chloroplast thylakoid membrane"/>
    <property type="evidence" value="ECO:0007669"/>
    <property type="project" value="UniProtKB-SubCell"/>
</dbReference>
<dbReference type="GO" id="GO:0051287">
    <property type="term" value="F:NAD binding"/>
    <property type="evidence" value="ECO:0007669"/>
    <property type="project" value="InterPro"/>
</dbReference>
<dbReference type="GO" id="GO:0016655">
    <property type="term" value="F:oxidoreductase activity, acting on NAD(P)H, quinone or similar compound as acceptor"/>
    <property type="evidence" value="ECO:0007669"/>
    <property type="project" value="UniProtKB-UniRule"/>
</dbReference>
<dbReference type="GO" id="GO:0048038">
    <property type="term" value="F:quinone binding"/>
    <property type="evidence" value="ECO:0007669"/>
    <property type="project" value="UniProtKB-KW"/>
</dbReference>
<dbReference type="GO" id="GO:0019684">
    <property type="term" value="P:photosynthesis, light reaction"/>
    <property type="evidence" value="ECO:0007669"/>
    <property type="project" value="UniProtKB-UniRule"/>
</dbReference>
<dbReference type="Gene3D" id="1.10.645.10">
    <property type="entry name" value="Cytochrome-c3 Hydrogenase, chain B"/>
    <property type="match status" value="1"/>
</dbReference>
<dbReference type="HAMAP" id="MF_01358">
    <property type="entry name" value="NDH1_NuoD"/>
    <property type="match status" value="1"/>
</dbReference>
<dbReference type="InterPro" id="IPR001135">
    <property type="entry name" value="NADH_Q_OxRdtase_suD"/>
</dbReference>
<dbReference type="InterPro" id="IPR014029">
    <property type="entry name" value="NADH_UbQ_OxRdtase_49kDa_CS"/>
</dbReference>
<dbReference type="InterPro" id="IPR022885">
    <property type="entry name" value="NDH1_su_D/H"/>
</dbReference>
<dbReference type="InterPro" id="IPR029014">
    <property type="entry name" value="NiFe-Hase_large"/>
</dbReference>
<dbReference type="NCBIfam" id="NF004739">
    <property type="entry name" value="PRK06075.1"/>
    <property type="match status" value="1"/>
</dbReference>
<dbReference type="NCBIfam" id="NF005649">
    <property type="entry name" value="PRK07415.1"/>
    <property type="match status" value="1"/>
</dbReference>
<dbReference type="PANTHER" id="PTHR11993:SF10">
    <property type="entry name" value="NADH DEHYDROGENASE [UBIQUINONE] IRON-SULFUR PROTEIN 2, MITOCHONDRIAL"/>
    <property type="match status" value="1"/>
</dbReference>
<dbReference type="PANTHER" id="PTHR11993">
    <property type="entry name" value="NADH-UBIQUINONE OXIDOREDUCTASE 49 KDA SUBUNIT"/>
    <property type="match status" value="1"/>
</dbReference>
<dbReference type="Pfam" id="PF00346">
    <property type="entry name" value="Complex1_49kDa"/>
    <property type="match status" value="1"/>
</dbReference>
<dbReference type="SUPFAM" id="SSF56762">
    <property type="entry name" value="HydB/Nqo4-like"/>
    <property type="match status" value="1"/>
</dbReference>
<dbReference type="PROSITE" id="PS00535">
    <property type="entry name" value="COMPLEX1_49K"/>
    <property type="match status" value="1"/>
</dbReference>
<name>NDHH_STAPU</name>
<gene>
    <name evidence="1" type="primary">ndhH</name>
</gene>
<geneLocation type="chloroplast"/>
<protein>
    <recommendedName>
        <fullName evidence="1">NAD(P)H-quinone oxidoreductase subunit H, chloroplastic</fullName>
        <ecNumber evidence="1">7.1.1.-</ecNumber>
    </recommendedName>
    <alternativeName>
        <fullName>NAD(P)H dehydrogenase subunit H</fullName>
    </alternativeName>
    <alternativeName>
        <fullName evidence="1">NADH-plastoquinone oxidoreductase 49 kDa subunit</fullName>
    </alternativeName>
    <alternativeName>
        <fullName evidence="1">NADH-plastoquinone oxidoreductase subunit H</fullName>
    </alternativeName>
</protein>
<accession>Q32S01</accession>